<evidence type="ECO:0000255" key="1">
    <source>
        <dbReference type="HAMAP-Rule" id="MF_00185"/>
    </source>
</evidence>
<organism>
    <name type="scientific">Treponema denticola (strain ATCC 35405 / DSM 14222 / CIP 103919 / JCM 8153 / KCTC 15104)</name>
    <dbReference type="NCBI Taxonomy" id="243275"/>
    <lineage>
        <taxon>Bacteria</taxon>
        <taxon>Pseudomonadati</taxon>
        <taxon>Spirochaetota</taxon>
        <taxon>Spirochaetia</taxon>
        <taxon>Spirochaetales</taxon>
        <taxon>Treponemataceae</taxon>
        <taxon>Treponema</taxon>
    </lineage>
</organism>
<accession>Q73MR1</accession>
<sequence>MNLDFLSLSDKHNSVVVLGATATGKTSYAVGLAKELGGEIISADSRQVYKGLDLGTGKDLKEYGDVPHHLIDICTLEREYNVFDFQNDAYKAFEDIKRRKKLPIFAGGTGLYLDSLIREYELIPVPKNEELRASLAGKDLTELQKFFFEYNVPMHNKTDLENMDRLMRAIEIAEYKKTHPDAAEILNANRPDIRPLIIGLKYPREILRERIRLRLLERIKDGMIEETESLHKEGFSWERLESLGLEYKFTAQYLQGKIKSREEYVDSLYRAICQFAKRQETWFRRMEKNGVKINWVLK</sequence>
<name>MIAA2_TREDE</name>
<dbReference type="EC" id="2.5.1.75" evidence="1"/>
<dbReference type="EMBL" id="AE017226">
    <property type="protein sequence ID" value="AAS11964.1"/>
    <property type="molecule type" value="Genomic_DNA"/>
</dbReference>
<dbReference type="RefSeq" id="NP_972053.1">
    <property type="nucleotide sequence ID" value="NC_002967.9"/>
</dbReference>
<dbReference type="SMR" id="Q73MR1"/>
<dbReference type="STRING" id="243275.TDE_1447"/>
<dbReference type="PaxDb" id="243275-TDE_1447"/>
<dbReference type="GeneID" id="2741410"/>
<dbReference type="KEGG" id="tde:TDE_1447"/>
<dbReference type="PATRIC" id="fig|243275.7.peg.1388"/>
<dbReference type="eggNOG" id="COG0324">
    <property type="taxonomic scope" value="Bacteria"/>
</dbReference>
<dbReference type="HOGENOM" id="CLU_032616_0_1_12"/>
<dbReference type="OrthoDB" id="9776390at2"/>
<dbReference type="Proteomes" id="UP000008212">
    <property type="component" value="Chromosome"/>
</dbReference>
<dbReference type="GO" id="GO:0005524">
    <property type="term" value="F:ATP binding"/>
    <property type="evidence" value="ECO:0007669"/>
    <property type="project" value="UniProtKB-UniRule"/>
</dbReference>
<dbReference type="GO" id="GO:0052381">
    <property type="term" value="F:tRNA dimethylallyltransferase activity"/>
    <property type="evidence" value="ECO:0007669"/>
    <property type="project" value="UniProtKB-UniRule"/>
</dbReference>
<dbReference type="GO" id="GO:0006400">
    <property type="term" value="P:tRNA modification"/>
    <property type="evidence" value="ECO:0007669"/>
    <property type="project" value="TreeGrafter"/>
</dbReference>
<dbReference type="Gene3D" id="3.40.50.300">
    <property type="entry name" value="P-loop containing nucleotide triphosphate hydrolases"/>
    <property type="match status" value="1"/>
</dbReference>
<dbReference type="HAMAP" id="MF_00185">
    <property type="entry name" value="IPP_trans"/>
    <property type="match status" value="1"/>
</dbReference>
<dbReference type="InterPro" id="IPR039657">
    <property type="entry name" value="Dimethylallyltransferase"/>
</dbReference>
<dbReference type="InterPro" id="IPR018022">
    <property type="entry name" value="IPT"/>
</dbReference>
<dbReference type="InterPro" id="IPR027417">
    <property type="entry name" value="P-loop_NTPase"/>
</dbReference>
<dbReference type="NCBIfam" id="TIGR00174">
    <property type="entry name" value="miaA"/>
    <property type="match status" value="1"/>
</dbReference>
<dbReference type="PANTHER" id="PTHR11088">
    <property type="entry name" value="TRNA DIMETHYLALLYLTRANSFERASE"/>
    <property type="match status" value="1"/>
</dbReference>
<dbReference type="PANTHER" id="PTHR11088:SF60">
    <property type="entry name" value="TRNA DIMETHYLALLYLTRANSFERASE"/>
    <property type="match status" value="1"/>
</dbReference>
<dbReference type="Pfam" id="PF01715">
    <property type="entry name" value="IPPT"/>
    <property type="match status" value="1"/>
</dbReference>
<dbReference type="SUPFAM" id="SSF52540">
    <property type="entry name" value="P-loop containing nucleoside triphosphate hydrolases"/>
    <property type="match status" value="2"/>
</dbReference>
<proteinExistence type="inferred from homology"/>
<gene>
    <name evidence="1" type="primary">miaA2</name>
    <name type="ordered locus">TDE_1447</name>
</gene>
<feature type="chain" id="PRO_0000377360" description="tRNA dimethylallyltransferase 2">
    <location>
        <begin position="1"/>
        <end position="298"/>
    </location>
</feature>
<feature type="region of interest" description="Interaction with substrate tRNA" evidence="1">
    <location>
        <begin position="44"/>
        <end position="47"/>
    </location>
</feature>
<feature type="binding site" evidence="1">
    <location>
        <begin position="19"/>
        <end position="26"/>
    </location>
    <ligand>
        <name>ATP</name>
        <dbReference type="ChEBI" id="CHEBI:30616"/>
    </ligand>
</feature>
<feature type="binding site" evidence="1">
    <location>
        <begin position="21"/>
        <end position="26"/>
    </location>
    <ligand>
        <name>substrate</name>
    </ligand>
</feature>
<feature type="site" description="Interaction with substrate tRNA" evidence="1">
    <location>
        <position position="109"/>
    </location>
</feature>
<keyword id="KW-0067">ATP-binding</keyword>
<keyword id="KW-0460">Magnesium</keyword>
<keyword id="KW-0547">Nucleotide-binding</keyword>
<keyword id="KW-1185">Reference proteome</keyword>
<keyword id="KW-0808">Transferase</keyword>
<keyword id="KW-0819">tRNA processing</keyword>
<protein>
    <recommendedName>
        <fullName evidence="1">tRNA dimethylallyltransferase 2</fullName>
        <ecNumber evidence="1">2.5.1.75</ecNumber>
    </recommendedName>
    <alternativeName>
        <fullName evidence="1">Dimethylallyl diphosphate:tRNA dimethylallyltransferase 2</fullName>
        <shortName evidence="1">DMAPP:tRNA dimethylallyltransferase 2</shortName>
        <shortName evidence="1">DMATase 2</shortName>
    </alternativeName>
    <alternativeName>
        <fullName evidence="1">Isopentenyl-diphosphate:tRNA isopentenyltransferase 2</fullName>
        <shortName evidence="1">IPP transferase 2</shortName>
        <shortName evidence="1">IPPT 2</shortName>
        <shortName evidence="1">IPTase 2</shortName>
    </alternativeName>
</protein>
<comment type="function">
    <text evidence="1">Catalyzes the transfer of a dimethylallyl group onto the adenine at position 37 in tRNAs that read codons beginning with uridine, leading to the formation of N6-(dimethylallyl)adenosine (i(6)A).</text>
</comment>
<comment type="catalytic activity">
    <reaction evidence="1">
        <text>adenosine(37) in tRNA + dimethylallyl diphosphate = N(6)-dimethylallyladenosine(37) in tRNA + diphosphate</text>
        <dbReference type="Rhea" id="RHEA:26482"/>
        <dbReference type="Rhea" id="RHEA-COMP:10162"/>
        <dbReference type="Rhea" id="RHEA-COMP:10375"/>
        <dbReference type="ChEBI" id="CHEBI:33019"/>
        <dbReference type="ChEBI" id="CHEBI:57623"/>
        <dbReference type="ChEBI" id="CHEBI:74411"/>
        <dbReference type="ChEBI" id="CHEBI:74415"/>
        <dbReference type="EC" id="2.5.1.75"/>
    </reaction>
</comment>
<comment type="cofactor">
    <cofactor evidence="1">
        <name>Mg(2+)</name>
        <dbReference type="ChEBI" id="CHEBI:18420"/>
    </cofactor>
</comment>
<comment type="subunit">
    <text evidence="1">Monomer.</text>
</comment>
<comment type="similarity">
    <text evidence="1">Belongs to the IPP transferase family.</text>
</comment>
<reference key="1">
    <citation type="journal article" date="2004" name="Proc. Natl. Acad. Sci. U.S.A.">
        <title>Comparison of the genome of the oral pathogen Treponema denticola with other spirochete genomes.</title>
        <authorList>
            <person name="Seshadri R."/>
            <person name="Myers G.S.A."/>
            <person name="Tettelin H."/>
            <person name="Eisen J.A."/>
            <person name="Heidelberg J.F."/>
            <person name="Dodson R.J."/>
            <person name="Davidsen T.M."/>
            <person name="DeBoy R.T."/>
            <person name="Fouts D.E."/>
            <person name="Haft D.H."/>
            <person name="Selengut J."/>
            <person name="Ren Q."/>
            <person name="Brinkac L.M."/>
            <person name="Madupu R."/>
            <person name="Kolonay J.F."/>
            <person name="Durkin S.A."/>
            <person name="Daugherty S.C."/>
            <person name="Shetty J."/>
            <person name="Shvartsbeyn A."/>
            <person name="Gebregeorgis E."/>
            <person name="Geer K."/>
            <person name="Tsegaye G."/>
            <person name="Malek J.A."/>
            <person name="Ayodeji B."/>
            <person name="Shatsman S."/>
            <person name="McLeod M.P."/>
            <person name="Smajs D."/>
            <person name="Howell J.K."/>
            <person name="Pal S."/>
            <person name="Amin A."/>
            <person name="Vashisth P."/>
            <person name="McNeill T.Z."/>
            <person name="Xiang Q."/>
            <person name="Sodergren E."/>
            <person name="Baca E."/>
            <person name="Weinstock G.M."/>
            <person name="Norris S.J."/>
            <person name="Fraser C.M."/>
            <person name="Paulsen I.T."/>
        </authorList>
    </citation>
    <scope>NUCLEOTIDE SEQUENCE [LARGE SCALE GENOMIC DNA]</scope>
    <source>
        <strain>ATCC 35405 / DSM 14222 / CIP 103919 / JCM 8153 / KCTC 15104</strain>
    </source>
</reference>